<protein>
    <recommendedName>
        <fullName evidence="1">Phosphatidylglycerol--prolipoprotein diacylglyceryl transferase</fullName>
        <ecNumber evidence="1">2.5.1.145</ecNumber>
    </recommendedName>
</protein>
<comment type="function">
    <text evidence="1">Catalyzes the transfer of the diacylglyceryl group from phosphatidylglycerol to the sulfhydryl group of the N-terminal cysteine of a prolipoprotein, the first step in the formation of mature lipoproteins.</text>
</comment>
<comment type="catalytic activity">
    <reaction evidence="1">
        <text>L-cysteinyl-[prolipoprotein] + a 1,2-diacyl-sn-glycero-3-phospho-(1'-sn-glycerol) = an S-1,2-diacyl-sn-glyceryl-L-cysteinyl-[prolipoprotein] + sn-glycerol 1-phosphate + H(+)</text>
        <dbReference type="Rhea" id="RHEA:56712"/>
        <dbReference type="Rhea" id="RHEA-COMP:14679"/>
        <dbReference type="Rhea" id="RHEA-COMP:14680"/>
        <dbReference type="ChEBI" id="CHEBI:15378"/>
        <dbReference type="ChEBI" id="CHEBI:29950"/>
        <dbReference type="ChEBI" id="CHEBI:57685"/>
        <dbReference type="ChEBI" id="CHEBI:64716"/>
        <dbReference type="ChEBI" id="CHEBI:140658"/>
        <dbReference type="EC" id="2.5.1.145"/>
    </reaction>
</comment>
<comment type="pathway">
    <text evidence="1">Protein modification; lipoprotein biosynthesis (diacylglyceryl transfer).</text>
</comment>
<comment type="subcellular location">
    <subcellularLocation>
        <location evidence="1">Cell inner membrane</location>
        <topology evidence="1">Multi-pass membrane protein</topology>
    </subcellularLocation>
</comment>
<comment type="similarity">
    <text evidence="1">Belongs to the Lgt family.</text>
</comment>
<organism>
    <name type="scientific">Cupriavidus pinatubonensis (strain JMP 134 / LMG 1197)</name>
    <name type="common">Cupriavidus necator (strain JMP 134)</name>
    <dbReference type="NCBI Taxonomy" id="264198"/>
    <lineage>
        <taxon>Bacteria</taxon>
        <taxon>Pseudomonadati</taxon>
        <taxon>Pseudomonadota</taxon>
        <taxon>Betaproteobacteria</taxon>
        <taxon>Burkholderiales</taxon>
        <taxon>Burkholderiaceae</taxon>
        <taxon>Cupriavidus</taxon>
    </lineage>
</organism>
<sequence length="276" mass="31193">MLIHPQFDPVAIHIGPLAIRWYGLMYLAGFIMFLWFGRLRIRQPHMAARGWAARDLDDMLFFGVMGVILGGRLGYVLFYKPSYYLTHPLEIFKVWEGGMAFHGGFLGVLVAMWLFARLRQRHWLEVTDFIAPMIPCGLAAGRIGNFINGELWGRPTDLPWGMIFPQAGDNIPRHPSQLYQFAGEGVALFIILWLFARKPRPMGAVSGVFLIGYGGFRFAAEFAREPDSFLGLLAMHLSMGQWLSLPMILIGIAMVVWAYRRQARSGEERPVTDSGA</sequence>
<proteinExistence type="inferred from homology"/>
<feature type="chain" id="PRO_1000053484" description="Phosphatidylglycerol--prolipoprotein diacylglyceryl transferase">
    <location>
        <begin position="1"/>
        <end position="276"/>
    </location>
</feature>
<feature type="transmembrane region" description="Helical" evidence="1">
    <location>
        <begin position="17"/>
        <end position="37"/>
    </location>
</feature>
<feature type="transmembrane region" description="Helical" evidence="1">
    <location>
        <begin position="59"/>
        <end position="79"/>
    </location>
</feature>
<feature type="transmembrane region" description="Helical" evidence="1">
    <location>
        <begin position="95"/>
        <end position="115"/>
    </location>
</feature>
<feature type="transmembrane region" description="Helical" evidence="1">
    <location>
        <begin position="129"/>
        <end position="149"/>
    </location>
</feature>
<feature type="transmembrane region" description="Helical" evidence="1">
    <location>
        <begin position="176"/>
        <end position="196"/>
    </location>
</feature>
<feature type="transmembrane region" description="Helical" evidence="1">
    <location>
        <begin position="202"/>
        <end position="222"/>
    </location>
</feature>
<feature type="transmembrane region" description="Helical" evidence="1">
    <location>
        <begin position="237"/>
        <end position="257"/>
    </location>
</feature>
<feature type="binding site" evidence="1">
    <location>
        <position position="142"/>
    </location>
    <ligand>
        <name>a 1,2-diacyl-sn-glycero-3-phospho-(1'-sn-glycerol)</name>
        <dbReference type="ChEBI" id="CHEBI:64716"/>
    </ligand>
</feature>
<evidence type="ECO:0000255" key="1">
    <source>
        <dbReference type="HAMAP-Rule" id="MF_01147"/>
    </source>
</evidence>
<gene>
    <name evidence="1" type="primary">lgt</name>
    <name type="ordered locus">Reut_A0641</name>
</gene>
<keyword id="KW-0997">Cell inner membrane</keyword>
<keyword id="KW-1003">Cell membrane</keyword>
<keyword id="KW-0472">Membrane</keyword>
<keyword id="KW-0808">Transferase</keyword>
<keyword id="KW-0812">Transmembrane</keyword>
<keyword id="KW-1133">Transmembrane helix</keyword>
<dbReference type="EC" id="2.5.1.145" evidence="1"/>
<dbReference type="EMBL" id="CP000090">
    <property type="protein sequence ID" value="AAZ60023.1"/>
    <property type="molecule type" value="Genomic_DNA"/>
</dbReference>
<dbReference type="SMR" id="Q475B0"/>
<dbReference type="STRING" id="264198.Reut_A0641"/>
<dbReference type="KEGG" id="reu:Reut_A0641"/>
<dbReference type="eggNOG" id="COG0682">
    <property type="taxonomic scope" value="Bacteria"/>
</dbReference>
<dbReference type="HOGENOM" id="CLU_013386_1_0_4"/>
<dbReference type="OrthoDB" id="871140at2"/>
<dbReference type="UniPathway" id="UPA00664"/>
<dbReference type="GO" id="GO:0005886">
    <property type="term" value="C:plasma membrane"/>
    <property type="evidence" value="ECO:0007669"/>
    <property type="project" value="UniProtKB-SubCell"/>
</dbReference>
<dbReference type="GO" id="GO:0008961">
    <property type="term" value="F:phosphatidylglycerol-prolipoprotein diacylglyceryl transferase activity"/>
    <property type="evidence" value="ECO:0007669"/>
    <property type="project" value="UniProtKB-UniRule"/>
</dbReference>
<dbReference type="GO" id="GO:0042158">
    <property type="term" value="P:lipoprotein biosynthetic process"/>
    <property type="evidence" value="ECO:0007669"/>
    <property type="project" value="UniProtKB-UniRule"/>
</dbReference>
<dbReference type="HAMAP" id="MF_01147">
    <property type="entry name" value="Lgt"/>
    <property type="match status" value="1"/>
</dbReference>
<dbReference type="InterPro" id="IPR001640">
    <property type="entry name" value="Lgt"/>
</dbReference>
<dbReference type="NCBIfam" id="TIGR00544">
    <property type="entry name" value="lgt"/>
    <property type="match status" value="1"/>
</dbReference>
<dbReference type="PANTHER" id="PTHR30589:SF0">
    <property type="entry name" value="PHOSPHATIDYLGLYCEROL--PROLIPOPROTEIN DIACYLGLYCERYL TRANSFERASE"/>
    <property type="match status" value="1"/>
</dbReference>
<dbReference type="PANTHER" id="PTHR30589">
    <property type="entry name" value="PROLIPOPROTEIN DIACYLGLYCERYL TRANSFERASE"/>
    <property type="match status" value="1"/>
</dbReference>
<dbReference type="Pfam" id="PF01790">
    <property type="entry name" value="LGT"/>
    <property type="match status" value="1"/>
</dbReference>
<dbReference type="PROSITE" id="PS01311">
    <property type="entry name" value="LGT"/>
    <property type="match status" value="1"/>
</dbReference>
<name>LGT_CUPPJ</name>
<accession>Q475B0</accession>
<reference key="1">
    <citation type="journal article" date="2010" name="PLoS ONE">
        <title>The complete multipartite genome sequence of Cupriavidus necator JMP134, a versatile pollutant degrader.</title>
        <authorList>
            <person name="Lykidis A."/>
            <person name="Perez-Pantoja D."/>
            <person name="Ledger T."/>
            <person name="Mavromatis K."/>
            <person name="Anderson I.J."/>
            <person name="Ivanova N.N."/>
            <person name="Hooper S.D."/>
            <person name="Lapidus A."/>
            <person name="Lucas S."/>
            <person name="Gonzalez B."/>
            <person name="Kyrpides N.C."/>
        </authorList>
    </citation>
    <scope>NUCLEOTIDE SEQUENCE [LARGE SCALE GENOMIC DNA]</scope>
    <source>
        <strain>JMP134 / LMG 1197</strain>
    </source>
</reference>